<protein>
    <recommendedName>
        <fullName evidence="1">Ribonuclease PH</fullName>
        <shortName evidence="1">RNase PH</shortName>
        <ecNumber evidence="1">2.7.7.56</ecNumber>
    </recommendedName>
    <alternativeName>
        <fullName evidence="1">tRNA nucleotidyltransferase</fullName>
    </alternativeName>
</protein>
<keyword id="KW-0548">Nucleotidyltransferase</keyword>
<keyword id="KW-1185">Reference proteome</keyword>
<keyword id="KW-0694">RNA-binding</keyword>
<keyword id="KW-0698">rRNA processing</keyword>
<keyword id="KW-0808">Transferase</keyword>
<keyword id="KW-0819">tRNA processing</keyword>
<keyword id="KW-0820">tRNA-binding</keyword>
<proteinExistence type="inferred from homology"/>
<feature type="chain" id="PRO_1000146770" description="Ribonuclease PH">
    <location>
        <begin position="1"/>
        <end position="240"/>
    </location>
</feature>
<feature type="binding site" evidence="1">
    <location>
        <position position="87"/>
    </location>
    <ligand>
        <name>phosphate</name>
        <dbReference type="ChEBI" id="CHEBI:43474"/>
        <note>substrate</note>
    </ligand>
</feature>
<feature type="binding site" evidence="1">
    <location>
        <begin position="125"/>
        <end position="127"/>
    </location>
    <ligand>
        <name>phosphate</name>
        <dbReference type="ChEBI" id="CHEBI:43474"/>
        <note>substrate</note>
    </ligand>
</feature>
<gene>
    <name evidence="1" type="primary">rph</name>
    <name type="ordered locus">Ccel_1352</name>
</gene>
<name>RNPH_RUMCH</name>
<evidence type="ECO:0000255" key="1">
    <source>
        <dbReference type="HAMAP-Rule" id="MF_00564"/>
    </source>
</evidence>
<accession>B8I1A8</accession>
<dbReference type="EC" id="2.7.7.56" evidence="1"/>
<dbReference type="EMBL" id="CP001348">
    <property type="protein sequence ID" value="ACL75706.1"/>
    <property type="molecule type" value="Genomic_DNA"/>
</dbReference>
<dbReference type="RefSeq" id="WP_015924854.1">
    <property type="nucleotide sequence ID" value="NC_011898.1"/>
</dbReference>
<dbReference type="SMR" id="B8I1A8"/>
<dbReference type="STRING" id="394503.Ccel_1352"/>
<dbReference type="KEGG" id="cce:Ccel_1352"/>
<dbReference type="eggNOG" id="COG0689">
    <property type="taxonomic scope" value="Bacteria"/>
</dbReference>
<dbReference type="HOGENOM" id="CLU_050858_0_0_9"/>
<dbReference type="OrthoDB" id="9807456at2"/>
<dbReference type="Proteomes" id="UP000001349">
    <property type="component" value="Chromosome"/>
</dbReference>
<dbReference type="GO" id="GO:0000175">
    <property type="term" value="F:3'-5'-RNA exonuclease activity"/>
    <property type="evidence" value="ECO:0007669"/>
    <property type="project" value="UniProtKB-UniRule"/>
</dbReference>
<dbReference type="GO" id="GO:0000049">
    <property type="term" value="F:tRNA binding"/>
    <property type="evidence" value="ECO:0007669"/>
    <property type="project" value="UniProtKB-UniRule"/>
</dbReference>
<dbReference type="GO" id="GO:0009022">
    <property type="term" value="F:tRNA nucleotidyltransferase activity"/>
    <property type="evidence" value="ECO:0007669"/>
    <property type="project" value="UniProtKB-UniRule"/>
</dbReference>
<dbReference type="GO" id="GO:0016075">
    <property type="term" value="P:rRNA catabolic process"/>
    <property type="evidence" value="ECO:0007669"/>
    <property type="project" value="UniProtKB-UniRule"/>
</dbReference>
<dbReference type="GO" id="GO:0006364">
    <property type="term" value="P:rRNA processing"/>
    <property type="evidence" value="ECO:0007669"/>
    <property type="project" value="UniProtKB-KW"/>
</dbReference>
<dbReference type="GO" id="GO:0008033">
    <property type="term" value="P:tRNA processing"/>
    <property type="evidence" value="ECO:0007669"/>
    <property type="project" value="UniProtKB-UniRule"/>
</dbReference>
<dbReference type="CDD" id="cd11362">
    <property type="entry name" value="RNase_PH_bact"/>
    <property type="match status" value="1"/>
</dbReference>
<dbReference type="FunFam" id="3.30.230.70:FF:000003">
    <property type="entry name" value="Ribonuclease PH"/>
    <property type="match status" value="1"/>
</dbReference>
<dbReference type="Gene3D" id="3.30.230.70">
    <property type="entry name" value="GHMP Kinase, N-terminal domain"/>
    <property type="match status" value="1"/>
</dbReference>
<dbReference type="HAMAP" id="MF_00564">
    <property type="entry name" value="RNase_PH"/>
    <property type="match status" value="1"/>
</dbReference>
<dbReference type="InterPro" id="IPR001247">
    <property type="entry name" value="ExoRNase_PH_dom1"/>
</dbReference>
<dbReference type="InterPro" id="IPR015847">
    <property type="entry name" value="ExoRNase_PH_dom2"/>
</dbReference>
<dbReference type="InterPro" id="IPR036345">
    <property type="entry name" value="ExoRNase_PH_dom2_sf"/>
</dbReference>
<dbReference type="InterPro" id="IPR027408">
    <property type="entry name" value="PNPase/RNase_PH_dom_sf"/>
</dbReference>
<dbReference type="InterPro" id="IPR020568">
    <property type="entry name" value="Ribosomal_Su5_D2-typ_SF"/>
</dbReference>
<dbReference type="InterPro" id="IPR050080">
    <property type="entry name" value="RNase_PH"/>
</dbReference>
<dbReference type="InterPro" id="IPR002381">
    <property type="entry name" value="RNase_PH_bac-type"/>
</dbReference>
<dbReference type="InterPro" id="IPR018336">
    <property type="entry name" value="RNase_PH_CS"/>
</dbReference>
<dbReference type="NCBIfam" id="TIGR01966">
    <property type="entry name" value="RNasePH"/>
    <property type="match status" value="1"/>
</dbReference>
<dbReference type="PANTHER" id="PTHR11953">
    <property type="entry name" value="EXOSOME COMPLEX COMPONENT"/>
    <property type="match status" value="1"/>
</dbReference>
<dbReference type="PANTHER" id="PTHR11953:SF0">
    <property type="entry name" value="EXOSOME COMPLEX COMPONENT RRP41"/>
    <property type="match status" value="1"/>
</dbReference>
<dbReference type="Pfam" id="PF01138">
    <property type="entry name" value="RNase_PH"/>
    <property type="match status" value="1"/>
</dbReference>
<dbReference type="Pfam" id="PF03725">
    <property type="entry name" value="RNase_PH_C"/>
    <property type="match status" value="1"/>
</dbReference>
<dbReference type="SUPFAM" id="SSF55666">
    <property type="entry name" value="Ribonuclease PH domain 2-like"/>
    <property type="match status" value="1"/>
</dbReference>
<dbReference type="SUPFAM" id="SSF54211">
    <property type="entry name" value="Ribosomal protein S5 domain 2-like"/>
    <property type="match status" value="1"/>
</dbReference>
<dbReference type="PROSITE" id="PS01277">
    <property type="entry name" value="RIBONUCLEASE_PH"/>
    <property type="match status" value="1"/>
</dbReference>
<organism>
    <name type="scientific">Ruminiclostridium cellulolyticum (strain ATCC 35319 / DSM 5812 / JCM 6584 / H10)</name>
    <name type="common">Clostridium cellulolyticum</name>
    <dbReference type="NCBI Taxonomy" id="394503"/>
    <lineage>
        <taxon>Bacteria</taxon>
        <taxon>Bacillati</taxon>
        <taxon>Bacillota</taxon>
        <taxon>Clostridia</taxon>
        <taxon>Eubacteriales</taxon>
        <taxon>Oscillospiraceae</taxon>
        <taxon>Ruminiclostridium</taxon>
    </lineage>
</organism>
<reference key="1">
    <citation type="submission" date="2009-01" db="EMBL/GenBank/DDBJ databases">
        <title>Complete sequence of Clostridium cellulolyticum H10.</title>
        <authorList>
            <consortium name="US DOE Joint Genome Institute"/>
            <person name="Lucas S."/>
            <person name="Copeland A."/>
            <person name="Lapidus A."/>
            <person name="Glavina del Rio T."/>
            <person name="Dalin E."/>
            <person name="Tice H."/>
            <person name="Bruce D."/>
            <person name="Goodwin L."/>
            <person name="Pitluck S."/>
            <person name="Chertkov O."/>
            <person name="Saunders E."/>
            <person name="Brettin T."/>
            <person name="Detter J.C."/>
            <person name="Han C."/>
            <person name="Larimer F."/>
            <person name="Land M."/>
            <person name="Hauser L."/>
            <person name="Kyrpides N."/>
            <person name="Ivanova N."/>
            <person name="Zhou J."/>
            <person name="Richardson P."/>
        </authorList>
    </citation>
    <scope>NUCLEOTIDE SEQUENCE [LARGE SCALE GENOMIC DNA]</scope>
    <source>
        <strain>ATCC 35319 / DSM 5812 / JCM 6584 / H10</strain>
    </source>
</reference>
<sequence>MLRHDGRSNTQLRSVRILRNYIKHAEGSVLIEVGDTKVICTASVEERIPPFKKDSGEGWVTAEYSMLPRATAVRNQRDISKLKLNGRSSEIQRLIGRSLRTIVDLKLLGERTITIDCDVIQADGGTRTASITGSYVALVDACRTLVKKGLISKMPVTGTVAATSVGIVNGEELLDLCYIEDSNAEVDMNVIKTDKGEFIEIQATGEKSSFSKKQLDQLLNLAESGIHELIKAQNEVLWKD</sequence>
<comment type="function">
    <text evidence="1">Phosphorolytic 3'-5' exoribonuclease that plays an important role in tRNA 3'-end maturation. Removes nucleotide residues following the 3'-CCA terminus of tRNAs; can also add nucleotides to the ends of RNA molecules by using nucleoside diphosphates as substrates, but this may not be physiologically important. Probably plays a role in initiation of 16S rRNA degradation (leading to ribosome degradation) during starvation.</text>
</comment>
<comment type="catalytic activity">
    <reaction evidence="1">
        <text>tRNA(n+1) + phosphate = tRNA(n) + a ribonucleoside 5'-diphosphate</text>
        <dbReference type="Rhea" id="RHEA:10628"/>
        <dbReference type="Rhea" id="RHEA-COMP:17343"/>
        <dbReference type="Rhea" id="RHEA-COMP:17344"/>
        <dbReference type="ChEBI" id="CHEBI:43474"/>
        <dbReference type="ChEBI" id="CHEBI:57930"/>
        <dbReference type="ChEBI" id="CHEBI:173114"/>
        <dbReference type="EC" id="2.7.7.56"/>
    </reaction>
</comment>
<comment type="subunit">
    <text evidence="1">Homohexameric ring arranged as a trimer of dimers.</text>
</comment>
<comment type="similarity">
    <text evidence="1">Belongs to the RNase PH family.</text>
</comment>